<organism>
    <name type="scientific">Yersinia enterocolitica serotype O:8 / biotype 1B (strain NCTC 13174 / 8081)</name>
    <dbReference type="NCBI Taxonomy" id="393305"/>
    <lineage>
        <taxon>Bacteria</taxon>
        <taxon>Pseudomonadati</taxon>
        <taxon>Pseudomonadota</taxon>
        <taxon>Gammaproteobacteria</taxon>
        <taxon>Enterobacterales</taxon>
        <taxon>Yersiniaceae</taxon>
        <taxon>Yersinia</taxon>
    </lineage>
</organism>
<evidence type="ECO:0000255" key="1">
    <source>
        <dbReference type="HAMAP-Rule" id="MF_00107"/>
    </source>
</evidence>
<feature type="chain" id="PRO_1000022892" description="2-C-methyl-D-erythritol 2,4-cyclodiphosphate synthase">
    <location>
        <begin position="1"/>
        <end position="162"/>
    </location>
</feature>
<feature type="binding site" evidence="1">
    <location>
        <begin position="8"/>
        <end position="10"/>
    </location>
    <ligand>
        <name>4-CDP-2-C-methyl-D-erythritol 2-phosphate</name>
        <dbReference type="ChEBI" id="CHEBI:57919"/>
    </ligand>
</feature>
<feature type="binding site" evidence="1">
    <location>
        <position position="8"/>
    </location>
    <ligand>
        <name>a divalent metal cation</name>
        <dbReference type="ChEBI" id="CHEBI:60240"/>
    </ligand>
</feature>
<feature type="binding site" evidence="1">
    <location>
        <position position="10"/>
    </location>
    <ligand>
        <name>a divalent metal cation</name>
        <dbReference type="ChEBI" id="CHEBI:60240"/>
    </ligand>
</feature>
<feature type="binding site" evidence="1">
    <location>
        <begin position="36"/>
        <end position="37"/>
    </location>
    <ligand>
        <name>4-CDP-2-C-methyl-D-erythritol 2-phosphate</name>
        <dbReference type="ChEBI" id="CHEBI:57919"/>
    </ligand>
</feature>
<feature type="binding site" evidence="1">
    <location>
        <position position="44"/>
    </location>
    <ligand>
        <name>a divalent metal cation</name>
        <dbReference type="ChEBI" id="CHEBI:60240"/>
    </ligand>
</feature>
<feature type="binding site" evidence="1">
    <location>
        <begin position="58"/>
        <end position="60"/>
    </location>
    <ligand>
        <name>4-CDP-2-C-methyl-D-erythritol 2-phosphate</name>
        <dbReference type="ChEBI" id="CHEBI:57919"/>
    </ligand>
</feature>
<feature type="binding site" evidence="1">
    <location>
        <begin position="63"/>
        <end position="67"/>
    </location>
    <ligand>
        <name>4-CDP-2-C-methyl-D-erythritol 2-phosphate</name>
        <dbReference type="ChEBI" id="CHEBI:57919"/>
    </ligand>
</feature>
<feature type="binding site" evidence="1">
    <location>
        <begin position="102"/>
        <end position="108"/>
    </location>
    <ligand>
        <name>4-CDP-2-C-methyl-D-erythritol 2-phosphate</name>
        <dbReference type="ChEBI" id="CHEBI:57919"/>
    </ligand>
</feature>
<feature type="binding site" evidence="1">
    <location>
        <begin position="134"/>
        <end position="137"/>
    </location>
    <ligand>
        <name>4-CDP-2-C-methyl-D-erythritol 2-phosphate</name>
        <dbReference type="ChEBI" id="CHEBI:57919"/>
    </ligand>
</feature>
<feature type="binding site" evidence="1">
    <location>
        <position position="141"/>
    </location>
    <ligand>
        <name>4-CDP-2-C-methyl-D-erythritol 2-phosphate</name>
        <dbReference type="ChEBI" id="CHEBI:57919"/>
    </ligand>
</feature>
<feature type="binding site" evidence="1">
    <location>
        <position position="144"/>
    </location>
    <ligand>
        <name>4-CDP-2-C-methyl-D-erythritol 2-phosphate</name>
        <dbReference type="ChEBI" id="CHEBI:57919"/>
    </ligand>
</feature>
<feature type="site" description="Transition state stabilizer" evidence="1">
    <location>
        <position position="36"/>
    </location>
</feature>
<feature type="site" description="Transition state stabilizer" evidence="1">
    <location>
        <position position="135"/>
    </location>
</feature>
<reference key="1">
    <citation type="journal article" date="2006" name="PLoS Genet.">
        <title>The complete genome sequence and comparative genome analysis of the high pathogenicity Yersinia enterocolitica strain 8081.</title>
        <authorList>
            <person name="Thomson N.R."/>
            <person name="Howard S."/>
            <person name="Wren B.W."/>
            <person name="Holden M.T.G."/>
            <person name="Crossman L."/>
            <person name="Challis G.L."/>
            <person name="Churcher C."/>
            <person name="Mungall K."/>
            <person name="Brooks K."/>
            <person name="Chillingworth T."/>
            <person name="Feltwell T."/>
            <person name="Abdellah Z."/>
            <person name="Hauser H."/>
            <person name="Jagels K."/>
            <person name="Maddison M."/>
            <person name="Moule S."/>
            <person name="Sanders M."/>
            <person name="Whitehead S."/>
            <person name="Quail M.A."/>
            <person name="Dougan G."/>
            <person name="Parkhill J."/>
            <person name="Prentice M.B."/>
        </authorList>
    </citation>
    <scope>NUCLEOTIDE SEQUENCE [LARGE SCALE GENOMIC DNA]</scope>
    <source>
        <strain>NCTC 13174 / 8081</strain>
    </source>
</reference>
<gene>
    <name evidence="1" type="primary">ispF</name>
    <name type="ordered locus">YE0770</name>
</gene>
<accession>A1JJT5</accession>
<proteinExistence type="inferred from homology"/>
<protein>
    <recommendedName>
        <fullName evidence="1">2-C-methyl-D-erythritol 2,4-cyclodiphosphate synthase</fullName>
        <shortName evidence="1">MECDP-synthase</shortName>
        <shortName evidence="1">MECPP-synthase</shortName>
        <shortName evidence="1">MECPS</shortName>
        <ecNumber evidence="1">4.6.1.12</ecNumber>
    </recommendedName>
</protein>
<comment type="function">
    <text evidence="1">Involved in the biosynthesis of isopentenyl diphosphate (IPP) and dimethylallyl diphosphate (DMAPP), two major building blocks of isoprenoid compounds. Catalyzes the conversion of 4-diphosphocytidyl-2-C-methyl-D-erythritol 2-phosphate (CDP-ME2P) to 2-C-methyl-D-erythritol 2,4-cyclodiphosphate (ME-CPP) with a corresponding release of cytidine 5-monophosphate (CMP).</text>
</comment>
<comment type="catalytic activity">
    <reaction evidence="1">
        <text>4-CDP-2-C-methyl-D-erythritol 2-phosphate = 2-C-methyl-D-erythritol 2,4-cyclic diphosphate + CMP</text>
        <dbReference type="Rhea" id="RHEA:23864"/>
        <dbReference type="ChEBI" id="CHEBI:57919"/>
        <dbReference type="ChEBI" id="CHEBI:58483"/>
        <dbReference type="ChEBI" id="CHEBI:60377"/>
        <dbReference type="EC" id="4.6.1.12"/>
    </reaction>
</comment>
<comment type="cofactor">
    <cofactor evidence="1">
        <name>a divalent metal cation</name>
        <dbReference type="ChEBI" id="CHEBI:60240"/>
    </cofactor>
    <text evidence="1">Binds 1 divalent metal cation per subunit.</text>
</comment>
<comment type="pathway">
    <text evidence="1">Isoprenoid biosynthesis; isopentenyl diphosphate biosynthesis via DXP pathway; isopentenyl diphosphate from 1-deoxy-D-xylulose 5-phosphate: step 4/6.</text>
</comment>
<comment type="subunit">
    <text evidence="1">Homotrimer.</text>
</comment>
<comment type="similarity">
    <text evidence="1">Belongs to the IspF family.</text>
</comment>
<keyword id="KW-0414">Isoprene biosynthesis</keyword>
<keyword id="KW-0456">Lyase</keyword>
<keyword id="KW-0479">Metal-binding</keyword>
<dbReference type="EC" id="4.6.1.12" evidence="1"/>
<dbReference type="EMBL" id="AM286415">
    <property type="protein sequence ID" value="CAL10872.1"/>
    <property type="molecule type" value="Genomic_DNA"/>
</dbReference>
<dbReference type="RefSeq" id="WP_005167293.1">
    <property type="nucleotide sequence ID" value="NC_008800.1"/>
</dbReference>
<dbReference type="RefSeq" id="YP_001005111.1">
    <property type="nucleotide sequence ID" value="NC_008800.1"/>
</dbReference>
<dbReference type="SMR" id="A1JJT5"/>
<dbReference type="KEGG" id="yen:YE0770"/>
<dbReference type="PATRIC" id="fig|393305.7.peg.863"/>
<dbReference type="eggNOG" id="COG0245">
    <property type="taxonomic scope" value="Bacteria"/>
</dbReference>
<dbReference type="HOGENOM" id="CLU_084630_2_0_6"/>
<dbReference type="OrthoDB" id="9804336at2"/>
<dbReference type="UniPathway" id="UPA00056">
    <property type="reaction ID" value="UER00095"/>
</dbReference>
<dbReference type="Proteomes" id="UP000000642">
    <property type="component" value="Chromosome"/>
</dbReference>
<dbReference type="GO" id="GO:0008685">
    <property type="term" value="F:2-C-methyl-D-erythritol 2,4-cyclodiphosphate synthase activity"/>
    <property type="evidence" value="ECO:0007669"/>
    <property type="project" value="UniProtKB-UniRule"/>
</dbReference>
<dbReference type="GO" id="GO:0046872">
    <property type="term" value="F:metal ion binding"/>
    <property type="evidence" value="ECO:0007669"/>
    <property type="project" value="UniProtKB-KW"/>
</dbReference>
<dbReference type="GO" id="GO:0019288">
    <property type="term" value="P:isopentenyl diphosphate biosynthetic process, methylerythritol 4-phosphate pathway"/>
    <property type="evidence" value="ECO:0007669"/>
    <property type="project" value="UniProtKB-UniRule"/>
</dbReference>
<dbReference type="GO" id="GO:0016114">
    <property type="term" value="P:terpenoid biosynthetic process"/>
    <property type="evidence" value="ECO:0007669"/>
    <property type="project" value="InterPro"/>
</dbReference>
<dbReference type="CDD" id="cd00554">
    <property type="entry name" value="MECDP_synthase"/>
    <property type="match status" value="1"/>
</dbReference>
<dbReference type="FunFam" id="3.30.1330.50:FF:000001">
    <property type="entry name" value="2-C-methyl-D-erythritol 2,4-cyclodiphosphate synthase"/>
    <property type="match status" value="1"/>
</dbReference>
<dbReference type="Gene3D" id="3.30.1330.50">
    <property type="entry name" value="2-C-methyl-D-erythritol 2,4-cyclodiphosphate synthase"/>
    <property type="match status" value="1"/>
</dbReference>
<dbReference type="HAMAP" id="MF_00107">
    <property type="entry name" value="IspF"/>
    <property type="match status" value="1"/>
</dbReference>
<dbReference type="InterPro" id="IPR003526">
    <property type="entry name" value="MECDP_synthase"/>
</dbReference>
<dbReference type="InterPro" id="IPR020555">
    <property type="entry name" value="MECDP_synthase_CS"/>
</dbReference>
<dbReference type="InterPro" id="IPR036571">
    <property type="entry name" value="MECDP_synthase_sf"/>
</dbReference>
<dbReference type="NCBIfam" id="TIGR00151">
    <property type="entry name" value="ispF"/>
    <property type="match status" value="1"/>
</dbReference>
<dbReference type="PANTHER" id="PTHR43181">
    <property type="entry name" value="2-C-METHYL-D-ERYTHRITOL 2,4-CYCLODIPHOSPHATE SYNTHASE, CHLOROPLASTIC"/>
    <property type="match status" value="1"/>
</dbReference>
<dbReference type="PANTHER" id="PTHR43181:SF1">
    <property type="entry name" value="2-C-METHYL-D-ERYTHRITOL 2,4-CYCLODIPHOSPHATE SYNTHASE, CHLOROPLASTIC"/>
    <property type="match status" value="1"/>
</dbReference>
<dbReference type="Pfam" id="PF02542">
    <property type="entry name" value="YgbB"/>
    <property type="match status" value="1"/>
</dbReference>
<dbReference type="SUPFAM" id="SSF69765">
    <property type="entry name" value="IpsF-like"/>
    <property type="match status" value="1"/>
</dbReference>
<dbReference type="PROSITE" id="PS01350">
    <property type="entry name" value="ISPF"/>
    <property type="match status" value="1"/>
</dbReference>
<name>ISPF_YERE8</name>
<sequence length="162" mass="17261">MRIGHGFDVHKFGENGSGPLIIGGVRIPYEKGLLAHSDGDVALHAATDALLGAAALGDIGKLFPDTDPAFKGADSRALLREAYRRILAKGYRLGNLDITIIAQAPKMAPHIPQMRVHLAEDLQCHMDDINVKATTTEQLGFTGRGEGIACEAVALLIKVEQA</sequence>